<comment type="function">
    <text evidence="1">Hydrolyzes the pyrophosphate bond of UDP-2,3-diacylglucosamine to yield 2,3-diacylglucosamine 1-phosphate (lipid X) and UMP by catalyzing the attack of water at the alpha-P atom. Involved in the biosynthesis of lipid A, a phosphorylated glycolipid that anchors the lipopolysaccharide to the outer membrane of the cell.</text>
</comment>
<comment type="catalytic activity">
    <reaction evidence="1">
        <text>UDP-2-N,3-O-bis[(3R)-3-hydroxytetradecanoyl]-alpha-D-glucosamine + H2O = 2-N,3-O-bis[(3R)-3-hydroxytetradecanoyl]-alpha-D-glucosaminyl 1-phosphate + UMP + 2 H(+)</text>
        <dbReference type="Rhea" id="RHEA:25213"/>
        <dbReference type="ChEBI" id="CHEBI:15377"/>
        <dbReference type="ChEBI" id="CHEBI:15378"/>
        <dbReference type="ChEBI" id="CHEBI:57865"/>
        <dbReference type="ChEBI" id="CHEBI:57957"/>
        <dbReference type="ChEBI" id="CHEBI:78847"/>
        <dbReference type="EC" id="3.6.1.54"/>
    </reaction>
</comment>
<comment type="cofactor">
    <cofactor evidence="1">
        <name>Mn(2+)</name>
        <dbReference type="ChEBI" id="CHEBI:29035"/>
    </cofactor>
    <text evidence="1">Binds 2 Mn(2+) ions per subunit in a binuclear metal center.</text>
</comment>
<comment type="pathway">
    <text evidence="1">Glycolipid biosynthesis; lipid IV(A) biosynthesis; lipid IV(A) from (3R)-3-hydroxytetradecanoyl-[acyl-carrier-protein] and UDP-N-acetyl-alpha-D-glucosamine: step 4/6.</text>
</comment>
<comment type="subcellular location">
    <subcellularLocation>
        <location evidence="1">Cell inner membrane</location>
        <topology evidence="1">Peripheral membrane protein</topology>
        <orientation evidence="1">Cytoplasmic side</orientation>
    </subcellularLocation>
</comment>
<comment type="similarity">
    <text evidence="1">Belongs to the LpxH family.</text>
</comment>
<organism>
    <name type="scientific">Shigella boydii serotype 4 (strain Sb227)</name>
    <dbReference type="NCBI Taxonomy" id="300268"/>
    <lineage>
        <taxon>Bacteria</taxon>
        <taxon>Pseudomonadati</taxon>
        <taxon>Pseudomonadota</taxon>
        <taxon>Gammaproteobacteria</taxon>
        <taxon>Enterobacterales</taxon>
        <taxon>Enterobacteriaceae</taxon>
        <taxon>Shigella</taxon>
    </lineage>
</organism>
<sequence>MATLFIADLHLCVEEPAITAGFLRFLAGEARKADALYILGDLFEAWIGDDDPNPLHRQMAAAIKAVSDSGVPCYFIHGNRDFLLGKRFARESGMTLLPEEKVLELYGRRVLIMHGDTLCTDDAGYQAFRAKVHKPWLQMLFLALPLFVRKRIAARMRANSKEANSSKSLAIMDVNQNAVVSAMEKHQVQWLIHGHTHRPAVHELIANQQPAFRVVLGAWHTEGSMVKVTADDVELIHFPF</sequence>
<evidence type="ECO:0000255" key="1">
    <source>
        <dbReference type="HAMAP-Rule" id="MF_00575"/>
    </source>
</evidence>
<name>LPXH_SHIBS</name>
<reference key="1">
    <citation type="journal article" date="2005" name="Nucleic Acids Res.">
        <title>Genome dynamics and diversity of Shigella species, the etiologic agents of bacillary dysentery.</title>
        <authorList>
            <person name="Yang F."/>
            <person name="Yang J."/>
            <person name="Zhang X."/>
            <person name="Chen L."/>
            <person name="Jiang Y."/>
            <person name="Yan Y."/>
            <person name="Tang X."/>
            <person name="Wang J."/>
            <person name="Xiong Z."/>
            <person name="Dong J."/>
            <person name="Xue Y."/>
            <person name="Zhu Y."/>
            <person name="Xu X."/>
            <person name="Sun L."/>
            <person name="Chen S."/>
            <person name="Nie H."/>
            <person name="Peng J."/>
            <person name="Xu J."/>
            <person name="Wang Y."/>
            <person name="Yuan Z."/>
            <person name="Wen Y."/>
            <person name="Yao Z."/>
            <person name="Shen Y."/>
            <person name="Qiang B."/>
            <person name="Hou Y."/>
            <person name="Yu J."/>
            <person name="Jin Q."/>
        </authorList>
    </citation>
    <scope>NUCLEOTIDE SEQUENCE [LARGE SCALE GENOMIC DNA]</scope>
    <source>
        <strain>Sb227</strain>
    </source>
</reference>
<gene>
    <name evidence="1" type="primary">lpxH</name>
    <name type="ordered locus">SBO_0419</name>
</gene>
<accession>Q324Y1</accession>
<feature type="chain" id="PRO_1000025090" description="UDP-2,3-diacylglucosamine hydrolase">
    <location>
        <begin position="1"/>
        <end position="240"/>
    </location>
</feature>
<feature type="binding site" evidence="1">
    <location>
        <position position="8"/>
    </location>
    <ligand>
        <name>Mn(2+)</name>
        <dbReference type="ChEBI" id="CHEBI:29035"/>
        <label>1</label>
    </ligand>
</feature>
<feature type="binding site" evidence="1">
    <location>
        <position position="10"/>
    </location>
    <ligand>
        <name>Mn(2+)</name>
        <dbReference type="ChEBI" id="CHEBI:29035"/>
        <label>1</label>
    </ligand>
</feature>
<feature type="binding site" evidence="1">
    <location>
        <position position="41"/>
    </location>
    <ligand>
        <name>Mn(2+)</name>
        <dbReference type="ChEBI" id="CHEBI:29035"/>
        <label>1</label>
    </ligand>
</feature>
<feature type="binding site" evidence="1">
    <location>
        <position position="41"/>
    </location>
    <ligand>
        <name>Mn(2+)</name>
        <dbReference type="ChEBI" id="CHEBI:29035"/>
        <label>2</label>
    </ligand>
</feature>
<feature type="binding site" evidence="1">
    <location>
        <begin position="79"/>
        <end position="80"/>
    </location>
    <ligand>
        <name>substrate</name>
    </ligand>
</feature>
<feature type="binding site" evidence="1">
    <location>
        <position position="79"/>
    </location>
    <ligand>
        <name>Mn(2+)</name>
        <dbReference type="ChEBI" id="CHEBI:29035"/>
        <label>2</label>
    </ligand>
</feature>
<feature type="binding site" evidence="1">
    <location>
        <position position="114"/>
    </location>
    <ligand>
        <name>Mn(2+)</name>
        <dbReference type="ChEBI" id="CHEBI:29035"/>
        <label>2</label>
    </ligand>
</feature>
<feature type="binding site" evidence="1">
    <location>
        <position position="122"/>
    </location>
    <ligand>
        <name>substrate</name>
    </ligand>
</feature>
<feature type="binding site" evidence="1">
    <location>
        <position position="160"/>
    </location>
    <ligand>
        <name>substrate</name>
    </ligand>
</feature>
<feature type="binding site" evidence="1">
    <location>
        <position position="164"/>
    </location>
    <ligand>
        <name>substrate</name>
    </ligand>
</feature>
<feature type="binding site" evidence="1">
    <location>
        <position position="167"/>
    </location>
    <ligand>
        <name>substrate</name>
    </ligand>
</feature>
<feature type="binding site" evidence="1">
    <location>
        <position position="195"/>
    </location>
    <ligand>
        <name>Mn(2+)</name>
        <dbReference type="ChEBI" id="CHEBI:29035"/>
        <label>2</label>
    </ligand>
</feature>
<feature type="binding site" evidence="1">
    <location>
        <position position="195"/>
    </location>
    <ligand>
        <name>substrate</name>
    </ligand>
</feature>
<feature type="binding site" evidence="1">
    <location>
        <position position="197"/>
    </location>
    <ligand>
        <name>Mn(2+)</name>
        <dbReference type="ChEBI" id="CHEBI:29035"/>
        <label>1</label>
    </ligand>
</feature>
<keyword id="KW-0997">Cell inner membrane</keyword>
<keyword id="KW-1003">Cell membrane</keyword>
<keyword id="KW-0378">Hydrolase</keyword>
<keyword id="KW-0441">Lipid A biosynthesis</keyword>
<keyword id="KW-0444">Lipid biosynthesis</keyword>
<keyword id="KW-0443">Lipid metabolism</keyword>
<keyword id="KW-0464">Manganese</keyword>
<keyword id="KW-0472">Membrane</keyword>
<keyword id="KW-0479">Metal-binding</keyword>
<protein>
    <recommendedName>
        <fullName evidence="1">UDP-2,3-diacylglucosamine hydrolase</fullName>
        <ecNumber evidence="1">3.6.1.54</ecNumber>
    </recommendedName>
    <alternativeName>
        <fullName evidence="1">UDP-2,3-diacylglucosamine diphosphatase</fullName>
    </alternativeName>
</protein>
<proteinExistence type="inferred from homology"/>
<dbReference type="EC" id="3.6.1.54" evidence="1"/>
<dbReference type="EMBL" id="CP000036">
    <property type="protein sequence ID" value="ABB65127.1"/>
    <property type="molecule type" value="Genomic_DNA"/>
</dbReference>
<dbReference type="RefSeq" id="WP_000212252.1">
    <property type="nucleotide sequence ID" value="NC_007613.1"/>
</dbReference>
<dbReference type="SMR" id="Q324Y1"/>
<dbReference type="GeneID" id="75204390"/>
<dbReference type="KEGG" id="sbo:SBO_0419"/>
<dbReference type="HOGENOM" id="CLU_074586_0_0_6"/>
<dbReference type="UniPathway" id="UPA00359">
    <property type="reaction ID" value="UER00480"/>
</dbReference>
<dbReference type="Proteomes" id="UP000007067">
    <property type="component" value="Chromosome"/>
</dbReference>
<dbReference type="GO" id="GO:0005737">
    <property type="term" value="C:cytoplasm"/>
    <property type="evidence" value="ECO:0007669"/>
    <property type="project" value="InterPro"/>
</dbReference>
<dbReference type="GO" id="GO:0019897">
    <property type="term" value="C:extrinsic component of plasma membrane"/>
    <property type="evidence" value="ECO:0007669"/>
    <property type="project" value="UniProtKB-UniRule"/>
</dbReference>
<dbReference type="GO" id="GO:0030145">
    <property type="term" value="F:manganese ion binding"/>
    <property type="evidence" value="ECO:0007669"/>
    <property type="project" value="UniProtKB-UniRule"/>
</dbReference>
<dbReference type="GO" id="GO:0008758">
    <property type="term" value="F:UDP-2,3-diacylglucosamine hydrolase activity"/>
    <property type="evidence" value="ECO:0007669"/>
    <property type="project" value="UniProtKB-UniRule"/>
</dbReference>
<dbReference type="GO" id="GO:0009245">
    <property type="term" value="P:lipid A biosynthetic process"/>
    <property type="evidence" value="ECO:0007669"/>
    <property type="project" value="UniProtKB-UniRule"/>
</dbReference>
<dbReference type="CDD" id="cd07398">
    <property type="entry name" value="MPP_YbbF-LpxH"/>
    <property type="match status" value="1"/>
</dbReference>
<dbReference type="FunFam" id="3.60.21.10:FF:000012">
    <property type="entry name" value="UDP-2,3-diacylglucosamine hydrolase"/>
    <property type="match status" value="1"/>
</dbReference>
<dbReference type="Gene3D" id="3.60.21.10">
    <property type="match status" value="1"/>
</dbReference>
<dbReference type="HAMAP" id="MF_00575">
    <property type="entry name" value="LpxH"/>
    <property type="match status" value="1"/>
</dbReference>
<dbReference type="InterPro" id="IPR004843">
    <property type="entry name" value="Calcineurin-like_PHP_ApaH"/>
</dbReference>
<dbReference type="InterPro" id="IPR043461">
    <property type="entry name" value="LpxH-like"/>
</dbReference>
<dbReference type="InterPro" id="IPR029052">
    <property type="entry name" value="Metallo-depent_PP-like"/>
</dbReference>
<dbReference type="InterPro" id="IPR010138">
    <property type="entry name" value="UDP-diacylglucosamine_Hdrlase"/>
</dbReference>
<dbReference type="NCBIfam" id="TIGR01854">
    <property type="entry name" value="lipid_A_lpxH"/>
    <property type="match status" value="1"/>
</dbReference>
<dbReference type="NCBIfam" id="NF003743">
    <property type="entry name" value="PRK05340.1"/>
    <property type="match status" value="1"/>
</dbReference>
<dbReference type="PANTHER" id="PTHR34990:SF1">
    <property type="entry name" value="UDP-2,3-DIACYLGLUCOSAMINE HYDROLASE"/>
    <property type="match status" value="1"/>
</dbReference>
<dbReference type="PANTHER" id="PTHR34990">
    <property type="entry name" value="UDP-2,3-DIACYLGLUCOSAMINE HYDROLASE-RELATED"/>
    <property type="match status" value="1"/>
</dbReference>
<dbReference type="Pfam" id="PF00149">
    <property type="entry name" value="Metallophos"/>
    <property type="match status" value="1"/>
</dbReference>
<dbReference type="SUPFAM" id="SSF56300">
    <property type="entry name" value="Metallo-dependent phosphatases"/>
    <property type="match status" value="1"/>
</dbReference>